<protein>
    <recommendedName>
        <fullName evidence="1">Inner membrane-spanning protein YciB</fullName>
    </recommendedName>
</protein>
<sequence>MKQLLDFLPLVIFFAVYKFFDIYIASGALIAATALQLVVTYALYKKLEKMHLITFAMVTVFGTLTLVFHDDAFIKWKVTIIYALFALALGVSQLLNKSILKSMLGKEMKVADNIWAHVTWYWVSFFAICGLVNIYVAFSLPLETWVNFKVFGLTALTLINTVITVFYLYKHLPEDQRKELK</sequence>
<accession>P59365</accession>
<dbReference type="EMBL" id="AE014299">
    <property type="protein sequence ID" value="AAN56047.1"/>
    <property type="molecule type" value="Genomic_DNA"/>
</dbReference>
<dbReference type="RefSeq" id="NP_718603.1">
    <property type="nucleotide sequence ID" value="NC_004347.2"/>
</dbReference>
<dbReference type="RefSeq" id="WP_011072938.1">
    <property type="nucleotide sequence ID" value="NC_004347.2"/>
</dbReference>
<dbReference type="STRING" id="211586.SO_3035"/>
<dbReference type="PaxDb" id="211586-SO_3035"/>
<dbReference type="KEGG" id="son:SO_3035"/>
<dbReference type="PATRIC" id="fig|211586.12.peg.2930"/>
<dbReference type="eggNOG" id="COG2917">
    <property type="taxonomic scope" value="Bacteria"/>
</dbReference>
<dbReference type="HOGENOM" id="CLU_089554_2_0_6"/>
<dbReference type="OrthoDB" id="9788219at2"/>
<dbReference type="PhylomeDB" id="P59365"/>
<dbReference type="BioCyc" id="SONE211586:G1GMP-2807-MONOMER"/>
<dbReference type="Proteomes" id="UP000008186">
    <property type="component" value="Chromosome"/>
</dbReference>
<dbReference type="GO" id="GO:0005886">
    <property type="term" value="C:plasma membrane"/>
    <property type="evidence" value="ECO:0000318"/>
    <property type="project" value="GO_Central"/>
</dbReference>
<dbReference type="HAMAP" id="MF_00189">
    <property type="entry name" value="YciB"/>
    <property type="match status" value="1"/>
</dbReference>
<dbReference type="InterPro" id="IPR006008">
    <property type="entry name" value="YciB"/>
</dbReference>
<dbReference type="NCBIfam" id="TIGR00997">
    <property type="entry name" value="ispZ"/>
    <property type="match status" value="1"/>
</dbReference>
<dbReference type="NCBIfam" id="NF001324">
    <property type="entry name" value="PRK00259.1-2"/>
    <property type="match status" value="1"/>
</dbReference>
<dbReference type="NCBIfam" id="NF001325">
    <property type="entry name" value="PRK00259.1-3"/>
    <property type="match status" value="1"/>
</dbReference>
<dbReference type="PANTHER" id="PTHR36917:SF1">
    <property type="entry name" value="INNER MEMBRANE-SPANNING PROTEIN YCIB"/>
    <property type="match status" value="1"/>
</dbReference>
<dbReference type="PANTHER" id="PTHR36917">
    <property type="entry name" value="INTRACELLULAR SEPTATION PROTEIN A-RELATED"/>
    <property type="match status" value="1"/>
</dbReference>
<dbReference type="Pfam" id="PF04279">
    <property type="entry name" value="IspA"/>
    <property type="match status" value="1"/>
</dbReference>
<keyword id="KW-0997">Cell inner membrane</keyword>
<keyword id="KW-1003">Cell membrane</keyword>
<keyword id="KW-0472">Membrane</keyword>
<keyword id="KW-1185">Reference proteome</keyword>
<keyword id="KW-0812">Transmembrane</keyword>
<keyword id="KW-1133">Transmembrane helix</keyword>
<comment type="function">
    <text evidence="1">Plays a role in cell envelope biogenesis, maintenance of cell envelope integrity and membrane homeostasis.</text>
</comment>
<comment type="subcellular location">
    <subcellularLocation>
        <location evidence="1">Cell inner membrane</location>
        <topology evidence="1">Multi-pass membrane protein</topology>
    </subcellularLocation>
</comment>
<comment type="similarity">
    <text evidence="1">Belongs to the YciB family.</text>
</comment>
<evidence type="ECO:0000255" key="1">
    <source>
        <dbReference type="HAMAP-Rule" id="MF_00189"/>
    </source>
</evidence>
<name>YCIB_SHEON</name>
<feature type="chain" id="PRO_0000206549" description="Inner membrane-spanning protein YciB">
    <location>
        <begin position="1"/>
        <end position="181"/>
    </location>
</feature>
<feature type="transmembrane region" description="Helical" evidence="1">
    <location>
        <begin position="10"/>
        <end position="30"/>
    </location>
</feature>
<feature type="transmembrane region" description="Helical" evidence="1">
    <location>
        <begin position="50"/>
        <end position="70"/>
    </location>
</feature>
<feature type="transmembrane region" description="Helical" evidence="1">
    <location>
        <begin position="72"/>
        <end position="92"/>
    </location>
</feature>
<feature type="transmembrane region" description="Helical" evidence="1">
    <location>
        <begin position="118"/>
        <end position="138"/>
    </location>
</feature>
<feature type="transmembrane region" description="Helical" evidence="1">
    <location>
        <begin position="148"/>
        <end position="168"/>
    </location>
</feature>
<proteinExistence type="inferred from homology"/>
<gene>
    <name evidence="1" type="primary">yciB</name>
    <name type="ordered locus">SO_3035</name>
</gene>
<organism>
    <name type="scientific">Shewanella oneidensis (strain ATCC 700550 / JCM 31522 / CIP 106686 / LMG 19005 / NCIMB 14063 / MR-1)</name>
    <dbReference type="NCBI Taxonomy" id="211586"/>
    <lineage>
        <taxon>Bacteria</taxon>
        <taxon>Pseudomonadati</taxon>
        <taxon>Pseudomonadota</taxon>
        <taxon>Gammaproteobacteria</taxon>
        <taxon>Alteromonadales</taxon>
        <taxon>Shewanellaceae</taxon>
        <taxon>Shewanella</taxon>
    </lineage>
</organism>
<reference key="1">
    <citation type="journal article" date="2002" name="Nat. Biotechnol.">
        <title>Genome sequence of the dissimilatory metal ion-reducing bacterium Shewanella oneidensis.</title>
        <authorList>
            <person name="Heidelberg J.F."/>
            <person name="Paulsen I.T."/>
            <person name="Nelson K.E."/>
            <person name="Gaidos E.J."/>
            <person name="Nelson W.C."/>
            <person name="Read T.D."/>
            <person name="Eisen J.A."/>
            <person name="Seshadri R."/>
            <person name="Ward N.L."/>
            <person name="Methe B.A."/>
            <person name="Clayton R.A."/>
            <person name="Meyer T."/>
            <person name="Tsapin A."/>
            <person name="Scott J."/>
            <person name="Beanan M.J."/>
            <person name="Brinkac L.M."/>
            <person name="Daugherty S.C."/>
            <person name="DeBoy R.T."/>
            <person name="Dodson R.J."/>
            <person name="Durkin A.S."/>
            <person name="Haft D.H."/>
            <person name="Kolonay J.F."/>
            <person name="Madupu R."/>
            <person name="Peterson J.D."/>
            <person name="Umayam L.A."/>
            <person name="White O."/>
            <person name="Wolf A.M."/>
            <person name="Vamathevan J.J."/>
            <person name="Weidman J.F."/>
            <person name="Impraim M."/>
            <person name="Lee K."/>
            <person name="Berry K.J."/>
            <person name="Lee C."/>
            <person name="Mueller J."/>
            <person name="Khouri H.M."/>
            <person name="Gill J."/>
            <person name="Utterback T.R."/>
            <person name="McDonald L.A."/>
            <person name="Feldblyum T.V."/>
            <person name="Smith H.O."/>
            <person name="Venter J.C."/>
            <person name="Nealson K.H."/>
            <person name="Fraser C.M."/>
        </authorList>
    </citation>
    <scope>NUCLEOTIDE SEQUENCE [LARGE SCALE GENOMIC DNA]</scope>
    <source>
        <strain>ATCC 700550 / JCM 31522 / CIP 106686 / LMG 19005 / NCIMB 14063 / MR-1</strain>
    </source>
</reference>